<comment type="function">
    <text evidence="4">Involved in the regulation of lipid metabolism in adipose tissue and liver.</text>
</comment>
<comment type="subunit">
    <text>May interact with ERFE.</text>
</comment>
<comment type="subcellular location">
    <subcellularLocation>
        <location evidence="5">Secreted</location>
    </subcellularLocation>
</comment>
<comment type="disruption phenotype">
    <text evidence="4">Knockout mice are born at the expected Mendelian ratio and appear normal with no gross developmental abnormalities. A reduction of body weight is observed in male, but not female, due to increased metabolic rate and energy expenditure. CTRP2 deficiency up-regulates the expression of lipolytic enzymes and protein kinase A signaling, resulting in enhanced adipose tissue lipolysis. Knockout mice also have altered hepatic and plasma lipid profiles. In contrast to lipid metabolism, whole-body glucose metabolism is not affected.</text>
</comment>
<comment type="caution">
    <text evidence="5">It is uncertain whether Met-1 or Met-10 is the initiator.</text>
</comment>
<evidence type="ECO:0000255" key="1"/>
<evidence type="ECO:0000255" key="2">
    <source>
        <dbReference type="PROSITE-ProRule" id="PRU00368"/>
    </source>
</evidence>
<evidence type="ECO:0000256" key="3">
    <source>
        <dbReference type="SAM" id="MobiDB-lite"/>
    </source>
</evidence>
<evidence type="ECO:0000269" key="4">
    <source>
    </source>
</evidence>
<evidence type="ECO:0000305" key="5"/>
<name>C1QT2_MOUSE</name>
<dbReference type="EMBL" id="DQ002395">
    <property type="protein sequence ID" value="AAY21927.1"/>
    <property type="molecule type" value="mRNA"/>
</dbReference>
<dbReference type="EMBL" id="AK007683">
    <property type="protein sequence ID" value="BAB25187.1"/>
    <property type="molecule type" value="mRNA"/>
</dbReference>
<dbReference type="EMBL" id="AL670472">
    <property type="status" value="NOT_ANNOTATED_CDS"/>
    <property type="molecule type" value="Genomic_DNA"/>
</dbReference>
<dbReference type="EMBL" id="BC030324">
    <property type="protein sequence ID" value="AAH30324.1"/>
    <property type="molecule type" value="mRNA"/>
</dbReference>
<dbReference type="RefSeq" id="NP_081255.1">
    <property type="nucleotide sequence ID" value="NM_026979.5"/>
</dbReference>
<dbReference type="RefSeq" id="XP_036012851.1">
    <property type="nucleotide sequence ID" value="XM_036156958.1"/>
</dbReference>
<dbReference type="RefSeq" id="XP_036012852.1">
    <property type="nucleotide sequence ID" value="XM_036156959.1"/>
</dbReference>
<dbReference type="SMR" id="Q9D8U4"/>
<dbReference type="FunCoup" id="Q9D8U4">
    <property type="interactions" value="18"/>
</dbReference>
<dbReference type="STRING" id="10090.ENSMUSP00000051652"/>
<dbReference type="GlyGen" id="Q9D8U4">
    <property type="glycosylation" value="2 sites, 1 N-linked glycan (1 site)"/>
</dbReference>
<dbReference type="iPTMnet" id="Q9D8U4"/>
<dbReference type="PhosphoSitePlus" id="Q9D8U4"/>
<dbReference type="PaxDb" id="10090-ENSMUSP00000051652"/>
<dbReference type="ProteomicsDB" id="273728"/>
<dbReference type="Antibodypedia" id="16666">
    <property type="antibodies" value="250 antibodies from 31 providers"/>
</dbReference>
<dbReference type="DNASU" id="69183"/>
<dbReference type="Ensembl" id="ENSMUST00000057679.10">
    <property type="protein sequence ID" value="ENSMUSP00000051652.4"/>
    <property type="gene ID" value="ENSMUSG00000046491.11"/>
</dbReference>
<dbReference type="GeneID" id="69183"/>
<dbReference type="KEGG" id="mmu:69183"/>
<dbReference type="UCSC" id="uc007imr.2">
    <property type="organism name" value="mouse"/>
</dbReference>
<dbReference type="AGR" id="MGI:1916433"/>
<dbReference type="CTD" id="114898"/>
<dbReference type="MGI" id="MGI:1916433">
    <property type="gene designation" value="C1qtnf2"/>
</dbReference>
<dbReference type="VEuPathDB" id="HostDB:ENSMUSG00000046491"/>
<dbReference type="eggNOG" id="ENOG502QT1U">
    <property type="taxonomic scope" value="Eukaryota"/>
</dbReference>
<dbReference type="GeneTree" id="ENSGT00940000159591"/>
<dbReference type="HOGENOM" id="CLU_001074_0_3_1"/>
<dbReference type="InParanoid" id="Q9D8U4"/>
<dbReference type="OMA" id="AMIPWVL"/>
<dbReference type="PhylomeDB" id="Q9D8U4"/>
<dbReference type="TreeFam" id="TF329591"/>
<dbReference type="BioGRID-ORCS" id="69183">
    <property type="hits" value="2 hits in 76 CRISPR screens"/>
</dbReference>
<dbReference type="PRO" id="PR:Q9D8U4"/>
<dbReference type="Proteomes" id="UP000000589">
    <property type="component" value="Chromosome 11"/>
</dbReference>
<dbReference type="RNAct" id="Q9D8U4">
    <property type="molecule type" value="protein"/>
</dbReference>
<dbReference type="Bgee" id="ENSMUSG00000046491">
    <property type="expression patterns" value="Expressed in head bone and 149 other cell types or tissues"/>
</dbReference>
<dbReference type="ExpressionAtlas" id="Q9D8U4">
    <property type="expression patterns" value="baseline and differential"/>
</dbReference>
<dbReference type="GO" id="GO:0005581">
    <property type="term" value="C:collagen trimer"/>
    <property type="evidence" value="ECO:0007669"/>
    <property type="project" value="UniProtKB-KW"/>
</dbReference>
<dbReference type="GO" id="GO:0005615">
    <property type="term" value="C:extracellular space"/>
    <property type="evidence" value="ECO:0000314"/>
    <property type="project" value="MGI"/>
</dbReference>
<dbReference type="GO" id="GO:0032991">
    <property type="term" value="C:protein-containing complex"/>
    <property type="evidence" value="ECO:0000314"/>
    <property type="project" value="MGI"/>
</dbReference>
<dbReference type="GO" id="GO:0042802">
    <property type="term" value="F:identical protein binding"/>
    <property type="evidence" value="ECO:0000314"/>
    <property type="project" value="MGI"/>
</dbReference>
<dbReference type="GO" id="GO:0005102">
    <property type="term" value="F:signaling receptor binding"/>
    <property type="evidence" value="ECO:0000314"/>
    <property type="project" value="MGI"/>
</dbReference>
<dbReference type="GO" id="GO:0046326">
    <property type="term" value="P:positive regulation of D-glucose import"/>
    <property type="evidence" value="ECO:0000314"/>
    <property type="project" value="MGI"/>
</dbReference>
<dbReference type="GO" id="GO:0046321">
    <property type="term" value="P:positive regulation of fatty acid oxidation"/>
    <property type="evidence" value="ECO:0000314"/>
    <property type="project" value="MGI"/>
</dbReference>
<dbReference type="GO" id="GO:0045725">
    <property type="term" value="P:positive regulation of glycogen biosynthetic process"/>
    <property type="evidence" value="ECO:0000314"/>
    <property type="project" value="MGI"/>
</dbReference>
<dbReference type="GO" id="GO:0043410">
    <property type="term" value="P:positive regulation of MAPK cascade"/>
    <property type="evidence" value="ECO:0000314"/>
    <property type="project" value="MGI"/>
</dbReference>
<dbReference type="GO" id="GO:0019216">
    <property type="term" value="P:regulation of lipid metabolic process"/>
    <property type="evidence" value="ECO:0000315"/>
    <property type="project" value="UniProtKB"/>
</dbReference>
<dbReference type="FunFam" id="2.60.120.40:FF:000001">
    <property type="entry name" value="Complement C1q B chain"/>
    <property type="match status" value="1"/>
</dbReference>
<dbReference type="Gene3D" id="2.60.120.40">
    <property type="match status" value="1"/>
</dbReference>
<dbReference type="InterPro" id="IPR001073">
    <property type="entry name" value="C1q_dom"/>
</dbReference>
<dbReference type="InterPro" id="IPR008160">
    <property type="entry name" value="Collagen"/>
</dbReference>
<dbReference type="InterPro" id="IPR050392">
    <property type="entry name" value="Collagen/C1q_domain"/>
</dbReference>
<dbReference type="InterPro" id="IPR008983">
    <property type="entry name" value="Tumour_necrosis_fac-like_dom"/>
</dbReference>
<dbReference type="PANTHER" id="PTHR15427:SF28">
    <property type="entry name" value="COMPLEMENT C1Q TUMOR NECROSIS FACTOR-RELATED PROTEIN 2"/>
    <property type="match status" value="1"/>
</dbReference>
<dbReference type="PANTHER" id="PTHR15427">
    <property type="entry name" value="EMILIN ELASTIN MICROFIBRIL INTERFACE-LOCATED PROTEIN ELASTIN MICROFIBRIL INTERFACER"/>
    <property type="match status" value="1"/>
</dbReference>
<dbReference type="Pfam" id="PF00386">
    <property type="entry name" value="C1q"/>
    <property type="match status" value="1"/>
</dbReference>
<dbReference type="Pfam" id="PF01391">
    <property type="entry name" value="Collagen"/>
    <property type="match status" value="2"/>
</dbReference>
<dbReference type="PRINTS" id="PR00007">
    <property type="entry name" value="COMPLEMNTC1Q"/>
</dbReference>
<dbReference type="SMART" id="SM00110">
    <property type="entry name" value="C1Q"/>
    <property type="match status" value="1"/>
</dbReference>
<dbReference type="SUPFAM" id="SSF49842">
    <property type="entry name" value="TNF-like"/>
    <property type="match status" value="1"/>
</dbReference>
<dbReference type="PROSITE" id="PS50871">
    <property type="entry name" value="C1Q"/>
    <property type="match status" value="1"/>
</dbReference>
<reference key="1">
    <citation type="journal article" date="2004" name="Proc. Natl. Acad. Sci. U.S.A.">
        <title>A family of Acrp30/adiponectin structural and functional paralogs.</title>
        <authorList>
            <person name="Wong G.W."/>
            <person name="Wang J."/>
            <person name="Hug C."/>
            <person name="Tsao T.S."/>
            <person name="Lodish H.F."/>
        </authorList>
    </citation>
    <scope>NUCLEOTIDE SEQUENCE [MRNA]</scope>
    <source>
        <strain>C57BL/6J</strain>
        <tissue>Lung</tissue>
    </source>
</reference>
<reference key="2">
    <citation type="journal article" date="2005" name="Science">
        <title>The transcriptional landscape of the mammalian genome.</title>
        <authorList>
            <person name="Carninci P."/>
            <person name="Kasukawa T."/>
            <person name="Katayama S."/>
            <person name="Gough J."/>
            <person name="Frith M.C."/>
            <person name="Maeda N."/>
            <person name="Oyama R."/>
            <person name="Ravasi T."/>
            <person name="Lenhard B."/>
            <person name="Wells C."/>
            <person name="Kodzius R."/>
            <person name="Shimokawa K."/>
            <person name="Bajic V.B."/>
            <person name="Brenner S.E."/>
            <person name="Batalov S."/>
            <person name="Forrest A.R."/>
            <person name="Zavolan M."/>
            <person name="Davis M.J."/>
            <person name="Wilming L.G."/>
            <person name="Aidinis V."/>
            <person name="Allen J.E."/>
            <person name="Ambesi-Impiombato A."/>
            <person name="Apweiler R."/>
            <person name="Aturaliya R.N."/>
            <person name="Bailey T.L."/>
            <person name="Bansal M."/>
            <person name="Baxter L."/>
            <person name="Beisel K.W."/>
            <person name="Bersano T."/>
            <person name="Bono H."/>
            <person name="Chalk A.M."/>
            <person name="Chiu K.P."/>
            <person name="Choudhary V."/>
            <person name="Christoffels A."/>
            <person name="Clutterbuck D.R."/>
            <person name="Crowe M.L."/>
            <person name="Dalla E."/>
            <person name="Dalrymple B.P."/>
            <person name="de Bono B."/>
            <person name="Della Gatta G."/>
            <person name="di Bernardo D."/>
            <person name="Down T."/>
            <person name="Engstrom P."/>
            <person name="Fagiolini M."/>
            <person name="Faulkner G."/>
            <person name="Fletcher C.F."/>
            <person name="Fukushima T."/>
            <person name="Furuno M."/>
            <person name="Futaki S."/>
            <person name="Gariboldi M."/>
            <person name="Georgii-Hemming P."/>
            <person name="Gingeras T.R."/>
            <person name="Gojobori T."/>
            <person name="Green R.E."/>
            <person name="Gustincich S."/>
            <person name="Harbers M."/>
            <person name="Hayashi Y."/>
            <person name="Hensch T.K."/>
            <person name="Hirokawa N."/>
            <person name="Hill D."/>
            <person name="Huminiecki L."/>
            <person name="Iacono M."/>
            <person name="Ikeo K."/>
            <person name="Iwama A."/>
            <person name="Ishikawa T."/>
            <person name="Jakt M."/>
            <person name="Kanapin A."/>
            <person name="Katoh M."/>
            <person name="Kawasawa Y."/>
            <person name="Kelso J."/>
            <person name="Kitamura H."/>
            <person name="Kitano H."/>
            <person name="Kollias G."/>
            <person name="Krishnan S.P."/>
            <person name="Kruger A."/>
            <person name="Kummerfeld S.K."/>
            <person name="Kurochkin I.V."/>
            <person name="Lareau L.F."/>
            <person name="Lazarevic D."/>
            <person name="Lipovich L."/>
            <person name="Liu J."/>
            <person name="Liuni S."/>
            <person name="McWilliam S."/>
            <person name="Madan Babu M."/>
            <person name="Madera M."/>
            <person name="Marchionni L."/>
            <person name="Matsuda H."/>
            <person name="Matsuzawa S."/>
            <person name="Miki H."/>
            <person name="Mignone F."/>
            <person name="Miyake S."/>
            <person name="Morris K."/>
            <person name="Mottagui-Tabar S."/>
            <person name="Mulder N."/>
            <person name="Nakano N."/>
            <person name="Nakauchi H."/>
            <person name="Ng P."/>
            <person name="Nilsson R."/>
            <person name="Nishiguchi S."/>
            <person name="Nishikawa S."/>
            <person name="Nori F."/>
            <person name="Ohara O."/>
            <person name="Okazaki Y."/>
            <person name="Orlando V."/>
            <person name="Pang K.C."/>
            <person name="Pavan W.J."/>
            <person name="Pavesi G."/>
            <person name="Pesole G."/>
            <person name="Petrovsky N."/>
            <person name="Piazza S."/>
            <person name="Reed J."/>
            <person name="Reid J.F."/>
            <person name="Ring B.Z."/>
            <person name="Ringwald M."/>
            <person name="Rost B."/>
            <person name="Ruan Y."/>
            <person name="Salzberg S.L."/>
            <person name="Sandelin A."/>
            <person name="Schneider C."/>
            <person name="Schoenbach C."/>
            <person name="Sekiguchi K."/>
            <person name="Semple C.A."/>
            <person name="Seno S."/>
            <person name="Sessa L."/>
            <person name="Sheng Y."/>
            <person name="Shibata Y."/>
            <person name="Shimada H."/>
            <person name="Shimada K."/>
            <person name="Silva D."/>
            <person name="Sinclair B."/>
            <person name="Sperling S."/>
            <person name="Stupka E."/>
            <person name="Sugiura K."/>
            <person name="Sultana R."/>
            <person name="Takenaka Y."/>
            <person name="Taki K."/>
            <person name="Tammoja K."/>
            <person name="Tan S.L."/>
            <person name="Tang S."/>
            <person name="Taylor M.S."/>
            <person name="Tegner J."/>
            <person name="Teichmann S.A."/>
            <person name="Ueda H.R."/>
            <person name="van Nimwegen E."/>
            <person name="Verardo R."/>
            <person name="Wei C.L."/>
            <person name="Yagi K."/>
            <person name="Yamanishi H."/>
            <person name="Zabarovsky E."/>
            <person name="Zhu S."/>
            <person name="Zimmer A."/>
            <person name="Hide W."/>
            <person name="Bult C."/>
            <person name="Grimmond S.M."/>
            <person name="Teasdale R.D."/>
            <person name="Liu E.T."/>
            <person name="Brusic V."/>
            <person name="Quackenbush J."/>
            <person name="Wahlestedt C."/>
            <person name="Mattick J.S."/>
            <person name="Hume D.A."/>
            <person name="Kai C."/>
            <person name="Sasaki D."/>
            <person name="Tomaru Y."/>
            <person name="Fukuda S."/>
            <person name="Kanamori-Katayama M."/>
            <person name="Suzuki M."/>
            <person name="Aoki J."/>
            <person name="Arakawa T."/>
            <person name="Iida J."/>
            <person name="Imamura K."/>
            <person name="Itoh M."/>
            <person name="Kato T."/>
            <person name="Kawaji H."/>
            <person name="Kawagashira N."/>
            <person name="Kawashima T."/>
            <person name="Kojima M."/>
            <person name="Kondo S."/>
            <person name="Konno H."/>
            <person name="Nakano K."/>
            <person name="Ninomiya N."/>
            <person name="Nishio T."/>
            <person name="Okada M."/>
            <person name="Plessy C."/>
            <person name="Shibata K."/>
            <person name="Shiraki T."/>
            <person name="Suzuki S."/>
            <person name="Tagami M."/>
            <person name="Waki K."/>
            <person name="Watahiki A."/>
            <person name="Okamura-Oho Y."/>
            <person name="Suzuki H."/>
            <person name="Kawai J."/>
            <person name="Hayashizaki Y."/>
        </authorList>
    </citation>
    <scope>NUCLEOTIDE SEQUENCE [LARGE SCALE MRNA]</scope>
    <source>
        <strain>C57BL/6J</strain>
        <tissue>Pancreas</tissue>
    </source>
</reference>
<reference key="3">
    <citation type="journal article" date="2009" name="PLoS Biol.">
        <title>Lineage-specific biology revealed by a finished genome assembly of the mouse.</title>
        <authorList>
            <person name="Church D.M."/>
            <person name="Goodstadt L."/>
            <person name="Hillier L.W."/>
            <person name="Zody M.C."/>
            <person name="Goldstein S."/>
            <person name="She X."/>
            <person name="Bult C.J."/>
            <person name="Agarwala R."/>
            <person name="Cherry J.L."/>
            <person name="DiCuccio M."/>
            <person name="Hlavina W."/>
            <person name="Kapustin Y."/>
            <person name="Meric P."/>
            <person name="Maglott D."/>
            <person name="Birtle Z."/>
            <person name="Marques A.C."/>
            <person name="Graves T."/>
            <person name="Zhou S."/>
            <person name="Teague B."/>
            <person name="Potamousis K."/>
            <person name="Churas C."/>
            <person name="Place M."/>
            <person name="Herschleb J."/>
            <person name="Runnheim R."/>
            <person name="Forrest D."/>
            <person name="Amos-Landgraf J."/>
            <person name="Schwartz D.C."/>
            <person name="Cheng Z."/>
            <person name="Lindblad-Toh K."/>
            <person name="Eichler E.E."/>
            <person name="Ponting C.P."/>
        </authorList>
    </citation>
    <scope>NUCLEOTIDE SEQUENCE [LARGE SCALE GENOMIC DNA]</scope>
    <source>
        <strain>C57BL/6J</strain>
    </source>
</reference>
<reference key="4">
    <citation type="journal article" date="2004" name="Genome Res.">
        <title>The status, quality, and expansion of the NIH full-length cDNA project: the Mammalian Gene Collection (MGC).</title>
        <authorList>
            <consortium name="The MGC Project Team"/>
        </authorList>
    </citation>
    <scope>NUCLEOTIDE SEQUENCE [LARGE SCALE MRNA]</scope>
    <source>
        <strain>FVB/N-3</strain>
        <tissue>Mammary tumor</tissue>
    </source>
</reference>
<reference key="5">
    <citation type="journal article" date="2012" name="J. Biol. Chem.">
        <title>Myonectin (CTRP15), a novel myokine that links skeletal muscle to systemic lipid homeostasis.</title>
        <authorList>
            <person name="Seldin M.M."/>
            <person name="Peterson J.M."/>
            <person name="Byerly M.S."/>
            <person name="Wei Z."/>
            <person name="Wong G.W."/>
        </authorList>
    </citation>
    <scope>INTERACTION WITH ERFE</scope>
</reference>
<reference key="6">
    <citation type="journal article" date="2019" name="J. Biol. Chem.">
        <title>C1q/TNF-related protein 2 (CTRP2) deletion promotes adipose tissue lipolysis and hepatic triglyceride secretion.</title>
        <authorList>
            <person name="Lei X."/>
            <person name="Wong G.W."/>
        </authorList>
    </citation>
    <scope>FUNCTION</scope>
    <scope>DISRUPTION PHENOTYPE</scope>
</reference>
<gene>
    <name type="primary">C1qtnf2</name>
    <name type="synonym">Crtp2</name>
</gene>
<keyword id="KW-0176">Collagen</keyword>
<keyword id="KW-1185">Reference proteome</keyword>
<keyword id="KW-0964">Secreted</keyword>
<keyword id="KW-0732">Signal</keyword>
<feature type="signal peptide" evidence="1">
    <location>
        <begin position="1"/>
        <end position="24"/>
    </location>
</feature>
<feature type="chain" id="PRO_0000320083" description="Complement C1q tumor necrosis factor-related protein 2">
    <location>
        <begin position="25"/>
        <end position="294"/>
    </location>
</feature>
<feature type="domain" description="Collagen-like">
    <location>
        <begin position="48"/>
        <end position="150"/>
    </location>
</feature>
<feature type="domain" description="C1q" evidence="2">
    <location>
        <begin position="154"/>
        <end position="290"/>
    </location>
</feature>
<feature type="region of interest" description="Disordered" evidence="3">
    <location>
        <begin position="42"/>
        <end position="156"/>
    </location>
</feature>
<feature type="compositionally biased region" description="Pro residues" evidence="3">
    <location>
        <begin position="50"/>
        <end position="59"/>
    </location>
</feature>
<feature type="compositionally biased region" description="Basic and acidic residues" evidence="3">
    <location>
        <begin position="75"/>
        <end position="87"/>
    </location>
</feature>
<feature type="compositionally biased region" description="Low complexity" evidence="3">
    <location>
        <begin position="105"/>
        <end position="129"/>
    </location>
</feature>
<organism>
    <name type="scientific">Mus musculus</name>
    <name type="common">Mouse</name>
    <dbReference type="NCBI Taxonomy" id="10090"/>
    <lineage>
        <taxon>Eukaryota</taxon>
        <taxon>Metazoa</taxon>
        <taxon>Chordata</taxon>
        <taxon>Craniata</taxon>
        <taxon>Vertebrata</taxon>
        <taxon>Euteleostomi</taxon>
        <taxon>Mammalia</taxon>
        <taxon>Eutheria</taxon>
        <taxon>Euarchontoglires</taxon>
        <taxon>Glires</taxon>
        <taxon>Rodentia</taxon>
        <taxon>Myomorpha</taxon>
        <taxon>Muroidea</taxon>
        <taxon>Muridae</taxon>
        <taxon>Murinae</taxon>
        <taxon>Mus</taxon>
        <taxon>Mus</taxon>
    </lineage>
</organism>
<accession>Q9D8U4</accession>
<proteinExistence type="evidence at protein level"/>
<sequence>MTIFKKVTTMISWVLLACALPCAADPMLGAFARRDFQKGGPQLVCSLPGPQGPPGPPGAPGSSGVVGRMGFPGKDGQDGQDGDRGDSGEEGPPGRTGNRGKQGPKGKAGAIGRAGPRGPKGVSGTPGKHGTPGKKGPKGKKGEPGLPGPCSCGSSRAKSAFSVAVTKSYPRERLPIKFDKILMNEGGHYNASSGKFVCSVPGIYYFTYDITLANKHLAIGLVHNGQYRIRTFDANTGNHDVASGSTILALKEGDEVWLQIFYSEQNGLFYDPYWTDSLFTGFLIYADQGDPNEV</sequence>
<protein>
    <recommendedName>
        <fullName>Complement C1q tumor necrosis factor-related protein 2</fullName>
        <shortName>mCTRP2</shortName>
    </recommendedName>
</protein>